<gene>
    <name evidence="1" type="primary">ureB</name>
</gene>
<proteinExistence type="evidence at protein level"/>
<reference key="1">
    <citation type="journal article" date="1994" name="Arch. Microbiol.">
        <title>Threonine is present instead of cysteine at the active site of urease from Staphylococcus xylosus.</title>
        <authorList>
            <person name="Jose J."/>
            <person name="Schaefer U.K."/>
            <person name="Kaltwasser H."/>
        </authorList>
    </citation>
    <scope>NUCLEOTIDE SEQUENCE [GENOMIC DNA]</scope>
    <scope>PROTEIN SEQUENCE OF 1-6</scope>
    <source>
        <strain>DSM 20267 / Isolate C2A</strain>
    </source>
</reference>
<protein>
    <recommendedName>
        <fullName evidence="1">Urease subunit beta</fullName>
        <ecNumber evidence="1">3.5.1.5</ecNumber>
    </recommendedName>
    <alternativeName>
        <fullName evidence="1">Urea amidohydrolase subunit beta</fullName>
    </alternativeName>
</protein>
<name>URE2_STAXY</name>
<dbReference type="EC" id="3.5.1.5" evidence="1"/>
<dbReference type="EMBL" id="X74600">
    <property type="protein sequence ID" value="CAA52679.1"/>
    <property type="molecule type" value="Genomic_DNA"/>
</dbReference>
<dbReference type="PIR" id="S38484">
    <property type="entry name" value="S38484"/>
</dbReference>
<dbReference type="RefSeq" id="WP_042361935.1">
    <property type="nucleotide sequence ID" value="NZ_CABIVW010000005.1"/>
</dbReference>
<dbReference type="SMR" id="P42874"/>
<dbReference type="STRING" id="1288.AWC37_10760"/>
<dbReference type="GeneID" id="45495930"/>
<dbReference type="eggNOG" id="COG0832">
    <property type="taxonomic scope" value="Bacteria"/>
</dbReference>
<dbReference type="OrthoDB" id="9797217at2"/>
<dbReference type="UniPathway" id="UPA00258">
    <property type="reaction ID" value="UER00370"/>
</dbReference>
<dbReference type="GO" id="GO:0035550">
    <property type="term" value="C:urease complex"/>
    <property type="evidence" value="ECO:0007669"/>
    <property type="project" value="InterPro"/>
</dbReference>
<dbReference type="GO" id="GO:0009039">
    <property type="term" value="F:urease activity"/>
    <property type="evidence" value="ECO:0007669"/>
    <property type="project" value="UniProtKB-UniRule"/>
</dbReference>
<dbReference type="GO" id="GO:0043419">
    <property type="term" value="P:urea catabolic process"/>
    <property type="evidence" value="ECO:0007669"/>
    <property type="project" value="UniProtKB-UniRule"/>
</dbReference>
<dbReference type="CDD" id="cd00407">
    <property type="entry name" value="Urease_beta"/>
    <property type="match status" value="1"/>
</dbReference>
<dbReference type="FunFam" id="2.10.150.10:FF:000001">
    <property type="entry name" value="Urease subunit beta"/>
    <property type="match status" value="1"/>
</dbReference>
<dbReference type="Gene3D" id="2.10.150.10">
    <property type="entry name" value="Urease, beta subunit"/>
    <property type="match status" value="1"/>
</dbReference>
<dbReference type="HAMAP" id="MF_01954">
    <property type="entry name" value="Urease_beta"/>
    <property type="match status" value="1"/>
</dbReference>
<dbReference type="InterPro" id="IPR002019">
    <property type="entry name" value="Urease_beta-like"/>
</dbReference>
<dbReference type="InterPro" id="IPR036461">
    <property type="entry name" value="Urease_betasu_sf"/>
</dbReference>
<dbReference type="InterPro" id="IPR050069">
    <property type="entry name" value="Urease_subunit"/>
</dbReference>
<dbReference type="NCBIfam" id="NF009682">
    <property type="entry name" value="PRK13203.1"/>
    <property type="match status" value="1"/>
</dbReference>
<dbReference type="NCBIfam" id="TIGR00192">
    <property type="entry name" value="urease_beta"/>
    <property type="match status" value="1"/>
</dbReference>
<dbReference type="PANTHER" id="PTHR33569">
    <property type="entry name" value="UREASE"/>
    <property type="match status" value="1"/>
</dbReference>
<dbReference type="PANTHER" id="PTHR33569:SF1">
    <property type="entry name" value="UREASE"/>
    <property type="match status" value="1"/>
</dbReference>
<dbReference type="Pfam" id="PF00699">
    <property type="entry name" value="Urease_beta"/>
    <property type="match status" value="1"/>
</dbReference>
<dbReference type="SUPFAM" id="SSF51278">
    <property type="entry name" value="Urease, beta-subunit"/>
    <property type="match status" value="1"/>
</dbReference>
<sequence>MKPGEIIVKRTEIEVNRGHNATILDVKNTGDRPIQVGSHYHFFEANPALQFEREKAYGKRLDIPAGAAVRFEPGDEKEVQLVEYSGKRRIFGFHGEVNGPIDEARVYKAEDDDSATEIIAEENKVSENANKESGYNR</sequence>
<evidence type="ECO:0000255" key="1">
    <source>
        <dbReference type="HAMAP-Rule" id="MF_01954"/>
    </source>
</evidence>
<evidence type="ECO:0000256" key="2">
    <source>
        <dbReference type="SAM" id="MobiDB-lite"/>
    </source>
</evidence>
<feature type="chain" id="PRO_0000067595" description="Urease subunit beta">
    <location>
        <begin position="1"/>
        <end position="137"/>
    </location>
</feature>
<feature type="region of interest" description="Disordered" evidence="2">
    <location>
        <begin position="118"/>
        <end position="137"/>
    </location>
</feature>
<feature type="compositionally biased region" description="Polar residues" evidence="2">
    <location>
        <begin position="126"/>
        <end position="137"/>
    </location>
</feature>
<keyword id="KW-0963">Cytoplasm</keyword>
<keyword id="KW-0903">Direct protein sequencing</keyword>
<keyword id="KW-0378">Hydrolase</keyword>
<comment type="catalytic activity">
    <reaction evidence="1">
        <text>urea + 2 H2O + H(+) = hydrogencarbonate + 2 NH4(+)</text>
        <dbReference type="Rhea" id="RHEA:20557"/>
        <dbReference type="ChEBI" id="CHEBI:15377"/>
        <dbReference type="ChEBI" id="CHEBI:15378"/>
        <dbReference type="ChEBI" id="CHEBI:16199"/>
        <dbReference type="ChEBI" id="CHEBI:17544"/>
        <dbReference type="ChEBI" id="CHEBI:28938"/>
        <dbReference type="EC" id="3.5.1.5"/>
    </reaction>
</comment>
<comment type="pathway">
    <text evidence="1">Nitrogen metabolism; urea degradation; CO(2) and NH(3) from urea (urease route): step 1/1.</text>
</comment>
<comment type="subunit">
    <text evidence="1">Heterotrimer of UreA (gamma), UreB (beta) and UreC (alpha) subunits. Three heterotrimers associate to form the active enzyme.</text>
</comment>
<comment type="subcellular location">
    <subcellularLocation>
        <location evidence="1">Cytoplasm</location>
    </subcellularLocation>
</comment>
<comment type="similarity">
    <text evidence="1">Belongs to the urease beta subunit family.</text>
</comment>
<accession>P42874</accession>
<organism>
    <name type="scientific">Staphylococcus xylosus</name>
    <dbReference type="NCBI Taxonomy" id="1288"/>
    <lineage>
        <taxon>Bacteria</taxon>
        <taxon>Bacillati</taxon>
        <taxon>Bacillota</taxon>
        <taxon>Bacilli</taxon>
        <taxon>Bacillales</taxon>
        <taxon>Staphylococcaceae</taxon>
        <taxon>Staphylococcus</taxon>
    </lineage>
</organism>